<reference key="1">
    <citation type="journal article" date="2006" name="Proc. Natl. Acad. Sci. U.S.A.">
        <title>Identification of genes subject to positive selection in uropathogenic strains of Escherichia coli: a comparative genomics approach.</title>
        <authorList>
            <person name="Chen S.L."/>
            <person name="Hung C.-S."/>
            <person name="Xu J."/>
            <person name="Reigstad C.S."/>
            <person name="Magrini V."/>
            <person name="Sabo A."/>
            <person name="Blasiar D."/>
            <person name="Bieri T."/>
            <person name="Meyer R.R."/>
            <person name="Ozersky P."/>
            <person name="Armstrong J.R."/>
            <person name="Fulton R.S."/>
            <person name="Latreille J.P."/>
            <person name="Spieth J."/>
            <person name="Hooton T.M."/>
            <person name="Mardis E.R."/>
            <person name="Hultgren S.J."/>
            <person name="Gordon J.I."/>
        </authorList>
    </citation>
    <scope>NUCLEOTIDE SEQUENCE [LARGE SCALE GENOMIC DNA]</scope>
    <source>
        <strain>UTI89 / UPEC</strain>
    </source>
</reference>
<organism>
    <name type="scientific">Escherichia coli (strain UTI89 / UPEC)</name>
    <dbReference type="NCBI Taxonomy" id="364106"/>
    <lineage>
        <taxon>Bacteria</taxon>
        <taxon>Pseudomonadati</taxon>
        <taxon>Pseudomonadota</taxon>
        <taxon>Gammaproteobacteria</taxon>
        <taxon>Enterobacterales</taxon>
        <taxon>Enterobacteriaceae</taxon>
        <taxon>Escherichia</taxon>
    </lineage>
</organism>
<proteinExistence type="inferred from homology"/>
<name>RL28_ECOUT</name>
<gene>
    <name evidence="1" type="primary">rpmB</name>
    <name type="ordered locus">UTI89_C4181</name>
</gene>
<accession>Q1R4V5</accession>
<comment type="similarity">
    <text evidence="1">Belongs to the bacterial ribosomal protein bL28 family.</text>
</comment>
<sequence length="78" mass="9006">MSRVCQVTGKRPVTGNNRSHALNATKRRFLPNLHSHRFWVESEKRFVTLRVSAKGMRVIDKKGIDTVLAELRARGEKY</sequence>
<feature type="chain" id="PRO_1000007229" description="Large ribosomal subunit protein bL28">
    <location>
        <begin position="1"/>
        <end position="78"/>
    </location>
</feature>
<evidence type="ECO:0000255" key="1">
    <source>
        <dbReference type="HAMAP-Rule" id="MF_00373"/>
    </source>
</evidence>
<evidence type="ECO:0000305" key="2"/>
<keyword id="KW-0687">Ribonucleoprotein</keyword>
<keyword id="KW-0689">Ribosomal protein</keyword>
<protein>
    <recommendedName>
        <fullName evidence="1">Large ribosomal subunit protein bL28</fullName>
    </recommendedName>
    <alternativeName>
        <fullName evidence="2">50S ribosomal protein L28</fullName>
    </alternativeName>
</protein>
<dbReference type="EMBL" id="CP000243">
    <property type="protein sequence ID" value="ABE09609.1"/>
    <property type="molecule type" value="Genomic_DNA"/>
</dbReference>
<dbReference type="RefSeq" id="WP_000091955.1">
    <property type="nucleotide sequence ID" value="NZ_CP064825.1"/>
</dbReference>
<dbReference type="SMR" id="Q1R4V5"/>
<dbReference type="GeneID" id="93778350"/>
<dbReference type="KEGG" id="eci:UTI89_C4181"/>
<dbReference type="HOGENOM" id="CLU_064548_3_1_6"/>
<dbReference type="Proteomes" id="UP000001952">
    <property type="component" value="Chromosome"/>
</dbReference>
<dbReference type="GO" id="GO:0022625">
    <property type="term" value="C:cytosolic large ribosomal subunit"/>
    <property type="evidence" value="ECO:0007669"/>
    <property type="project" value="TreeGrafter"/>
</dbReference>
<dbReference type="GO" id="GO:0003735">
    <property type="term" value="F:structural constituent of ribosome"/>
    <property type="evidence" value="ECO:0007669"/>
    <property type="project" value="InterPro"/>
</dbReference>
<dbReference type="GO" id="GO:0006412">
    <property type="term" value="P:translation"/>
    <property type="evidence" value="ECO:0007669"/>
    <property type="project" value="UniProtKB-UniRule"/>
</dbReference>
<dbReference type="FunFam" id="2.30.170.40:FF:000001">
    <property type="entry name" value="50S ribosomal protein L28"/>
    <property type="match status" value="1"/>
</dbReference>
<dbReference type="Gene3D" id="2.30.170.40">
    <property type="entry name" value="Ribosomal protein L28/L24"/>
    <property type="match status" value="1"/>
</dbReference>
<dbReference type="HAMAP" id="MF_00373">
    <property type="entry name" value="Ribosomal_bL28"/>
    <property type="match status" value="1"/>
</dbReference>
<dbReference type="InterPro" id="IPR026569">
    <property type="entry name" value="Ribosomal_bL28"/>
</dbReference>
<dbReference type="InterPro" id="IPR034704">
    <property type="entry name" value="Ribosomal_bL28/bL31-like_sf"/>
</dbReference>
<dbReference type="InterPro" id="IPR001383">
    <property type="entry name" value="Ribosomal_bL28_bact-type"/>
</dbReference>
<dbReference type="InterPro" id="IPR037147">
    <property type="entry name" value="Ribosomal_bL28_sf"/>
</dbReference>
<dbReference type="NCBIfam" id="TIGR00009">
    <property type="entry name" value="L28"/>
    <property type="match status" value="1"/>
</dbReference>
<dbReference type="PANTHER" id="PTHR13528">
    <property type="entry name" value="39S RIBOSOMAL PROTEIN L28, MITOCHONDRIAL"/>
    <property type="match status" value="1"/>
</dbReference>
<dbReference type="PANTHER" id="PTHR13528:SF2">
    <property type="entry name" value="LARGE RIBOSOMAL SUBUNIT PROTEIN BL28M"/>
    <property type="match status" value="1"/>
</dbReference>
<dbReference type="Pfam" id="PF00830">
    <property type="entry name" value="Ribosomal_L28"/>
    <property type="match status" value="1"/>
</dbReference>
<dbReference type="SUPFAM" id="SSF143800">
    <property type="entry name" value="L28p-like"/>
    <property type="match status" value="1"/>
</dbReference>